<name>FETP_CUPNH</name>
<evidence type="ECO:0000255" key="1">
    <source>
        <dbReference type="HAMAP-Rule" id="MF_00686"/>
    </source>
</evidence>
<proteinExistence type="inferred from homology"/>
<gene>
    <name type="ordered locus">H16_A2344</name>
</gene>
<accession>Q0K981</accession>
<feature type="chain" id="PRO_1000045059" description="Probable Fe(2+)-trafficking protein">
    <location>
        <begin position="1"/>
        <end position="90"/>
    </location>
</feature>
<organism>
    <name type="scientific">Cupriavidus necator (strain ATCC 17699 / DSM 428 / KCTC 22496 / NCIMB 10442 / H16 / Stanier 337)</name>
    <name type="common">Ralstonia eutropha</name>
    <dbReference type="NCBI Taxonomy" id="381666"/>
    <lineage>
        <taxon>Bacteria</taxon>
        <taxon>Pseudomonadati</taxon>
        <taxon>Pseudomonadota</taxon>
        <taxon>Betaproteobacteria</taxon>
        <taxon>Burkholderiales</taxon>
        <taxon>Burkholderiaceae</taxon>
        <taxon>Cupriavidus</taxon>
    </lineage>
</organism>
<keyword id="KW-0408">Iron</keyword>
<keyword id="KW-1185">Reference proteome</keyword>
<comment type="function">
    <text evidence="1">Could be a mediator in iron transactions between iron acquisition and iron-requiring processes, such as synthesis and/or repair of Fe-S clusters in biosynthetic enzymes.</text>
</comment>
<comment type="similarity">
    <text evidence="1">Belongs to the Fe(2+)-trafficking protein family.</text>
</comment>
<reference key="1">
    <citation type="journal article" date="2006" name="Nat. Biotechnol.">
        <title>Genome sequence of the bioplastic-producing 'Knallgas' bacterium Ralstonia eutropha H16.</title>
        <authorList>
            <person name="Pohlmann A."/>
            <person name="Fricke W.F."/>
            <person name="Reinecke F."/>
            <person name="Kusian B."/>
            <person name="Liesegang H."/>
            <person name="Cramm R."/>
            <person name="Eitinger T."/>
            <person name="Ewering C."/>
            <person name="Poetter M."/>
            <person name="Schwartz E."/>
            <person name="Strittmatter A."/>
            <person name="Voss I."/>
            <person name="Gottschalk G."/>
            <person name="Steinbuechel A."/>
            <person name="Friedrich B."/>
            <person name="Bowien B."/>
        </authorList>
    </citation>
    <scope>NUCLEOTIDE SEQUENCE [LARGE SCALE GENOMIC DNA]</scope>
    <source>
        <strain>ATCC 17699 / DSM 428 / KCTC 22496 / NCIMB 10442 / H16 / Stanier 337</strain>
    </source>
</reference>
<sequence length="90" mass="10297">MARMVQCIKLNKEAEGLDFPPLPGELGKKIWQSVSKEAWAGWLKHQTMLINENRLNMADARARQYLLKQTEKYFFGEGADQAQGYVPPQS</sequence>
<dbReference type="EMBL" id="AM260479">
    <property type="protein sequence ID" value="CAJ93440.1"/>
    <property type="molecule type" value="Genomic_DNA"/>
</dbReference>
<dbReference type="RefSeq" id="WP_010809445.1">
    <property type="nucleotide sequence ID" value="NZ_CP039287.1"/>
</dbReference>
<dbReference type="SMR" id="Q0K981"/>
<dbReference type="STRING" id="381666.H16_A2344"/>
<dbReference type="KEGG" id="reh:H16_A2344"/>
<dbReference type="eggNOG" id="COG2924">
    <property type="taxonomic scope" value="Bacteria"/>
</dbReference>
<dbReference type="HOGENOM" id="CLU_170994_0_0_4"/>
<dbReference type="OrthoDB" id="9804318at2"/>
<dbReference type="Proteomes" id="UP000008210">
    <property type="component" value="Chromosome 1"/>
</dbReference>
<dbReference type="GO" id="GO:0005829">
    <property type="term" value="C:cytosol"/>
    <property type="evidence" value="ECO:0007669"/>
    <property type="project" value="TreeGrafter"/>
</dbReference>
<dbReference type="GO" id="GO:0005506">
    <property type="term" value="F:iron ion binding"/>
    <property type="evidence" value="ECO:0007669"/>
    <property type="project" value="UniProtKB-UniRule"/>
</dbReference>
<dbReference type="GO" id="GO:0034599">
    <property type="term" value="P:cellular response to oxidative stress"/>
    <property type="evidence" value="ECO:0007669"/>
    <property type="project" value="TreeGrafter"/>
</dbReference>
<dbReference type="FunFam" id="1.10.3880.10:FF:000001">
    <property type="entry name" value="Probable Fe(2+)-trafficking protein"/>
    <property type="match status" value="1"/>
</dbReference>
<dbReference type="Gene3D" id="1.10.3880.10">
    <property type="entry name" value="Fe(II) trafficking protein YggX"/>
    <property type="match status" value="1"/>
</dbReference>
<dbReference type="HAMAP" id="MF_00686">
    <property type="entry name" value="Fe_traffic_YggX"/>
    <property type="match status" value="1"/>
</dbReference>
<dbReference type="InterPro" id="IPR007457">
    <property type="entry name" value="Fe_traffick_prot_YggX"/>
</dbReference>
<dbReference type="InterPro" id="IPR036766">
    <property type="entry name" value="Fe_traffick_prot_YggX_sf"/>
</dbReference>
<dbReference type="NCBIfam" id="NF003817">
    <property type="entry name" value="PRK05408.1"/>
    <property type="match status" value="1"/>
</dbReference>
<dbReference type="PANTHER" id="PTHR36965">
    <property type="entry name" value="FE(2+)-TRAFFICKING PROTEIN-RELATED"/>
    <property type="match status" value="1"/>
</dbReference>
<dbReference type="PANTHER" id="PTHR36965:SF1">
    <property type="entry name" value="FE(2+)-TRAFFICKING PROTEIN-RELATED"/>
    <property type="match status" value="1"/>
</dbReference>
<dbReference type="Pfam" id="PF04362">
    <property type="entry name" value="Iron_traffic"/>
    <property type="match status" value="1"/>
</dbReference>
<dbReference type="PIRSF" id="PIRSF029827">
    <property type="entry name" value="Fe_traffic_YggX"/>
    <property type="match status" value="1"/>
</dbReference>
<dbReference type="SUPFAM" id="SSF111148">
    <property type="entry name" value="YggX-like"/>
    <property type="match status" value="1"/>
</dbReference>
<protein>
    <recommendedName>
        <fullName evidence="1">Probable Fe(2+)-trafficking protein</fullName>
    </recommendedName>
</protein>